<protein>
    <recommendedName>
        <fullName evidence="1">UDP-N-acetylglucosamine 1-carboxyvinyltransferase</fullName>
        <ecNumber evidence="1">2.5.1.7</ecNumber>
    </recommendedName>
    <alternativeName>
        <fullName evidence="1">Enoylpyruvate transferase</fullName>
    </alternativeName>
    <alternativeName>
        <fullName evidence="1">UDP-N-acetylglucosamine enolpyruvyl transferase</fullName>
        <shortName evidence="1">EPT</shortName>
    </alternativeName>
</protein>
<reference key="1">
    <citation type="journal article" date="2004" name="Proc. Natl. Acad. Sci. U.S.A.">
        <title>Genome sequence of the enterobacterial phytopathogen Erwinia carotovora subsp. atroseptica and characterization of virulence factors.</title>
        <authorList>
            <person name="Bell K.S."/>
            <person name="Sebaihia M."/>
            <person name="Pritchard L."/>
            <person name="Holden M.T.G."/>
            <person name="Hyman L.J."/>
            <person name="Holeva M.C."/>
            <person name="Thomson N.R."/>
            <person name="Bentley S.D."/>
            <person name="Churcher L.J.C."/>
            <person name="Mungall K."/>
            <person name="Atkin R."/>
            <person name="Bason N."/>
            <person name="Brooks K."/>
            <person name="Chillingworth T."/>
            <person name="Clark K."/>
            <person name="Doggett J."/>
            <person name="Fraser A."/>
            <person name="Hance Z."/>
            <person name="Hauser H."/>
            <person name="Jagels K."/>
            <person name="Moule S."/>
            <person name="Norbertczak H."/>
            <person name="Ormond D."/>
            <person name="Price C."/>
            <person name="Quail M.A."/>
            <person name="Sanders M."/>
            <person name="Walker D."/>
            <person name="Whitehead S."/>
            <person name="Salmond G.P.C."/>
            <person name="Birch P.R.J."/>
            <person name="Parkhill J."/>
            <person name="Toth I.K."/>
        </authorList>
    </citation>
    <scope>NUCLEOTIDE SEQUENCE [LARGE SCALE GENOMIC DNA]</scope>
    <source>
        <strain>SCRI 1043 / ATCC BAA-672</strain>
    </source>
</reference>
<proteinExistence type="inferred from homology"/>
<organism>
    <name type="scientific">Pectobacterium atrosepticum (strain SCRI 1043 / ATCC BAA-672)</name>
    <name type="common">Erwinia carotovora subsp. atroseptica</name>
    <dbReference type="NCBI Taxonomy" id="218491"/>
    <lineage>
        <taxon>Bacteria</taxon>
        <taxon>Pseudomonadati</taxon>
        <taxon>Pseudomonadota</taxon>
        <taxon>Gammaproteobacteria</taxon>
        <taxon>Enterobacterales</taxon>
        <taxon>Pectobacteriaceae</taxon>
        <taxon>Pectobacterium</taxon>
    </lineage>
</organism>
<feature type="chain" id="PRO_0000231204" description="UDP-N-acetylglucosamine 1-carboxyvinyltransferase">
    <location>
        <begin position="1"/>
        <end position="420"/>
    </location>
</feature>
<feature type="active site" description="Proton donor" evidence="1">
    <location>
        <position position="115"/>
    </location>
</feature>
<feature type="binding site" evidence="1">
    <location>
        <begin position="22"/>
        <end position="23"/>
    </location>
    <ligand>
        <name>phosphoenolpyruvate</name>
        <dbReference type="ChEBI" id="CHEBI:58702"/>
    </ligand>
</feature>
<feature type="binding site" evidence="1">
    <location>
        <position position="91"/>
    </location>
    <ligand>
        <name>UDP-N-acetyl-alpha-D-glucosamine</name>
        <dbReference type="ChEBI" id="CHEBI:57705"/>
    </ligand>
</feature>
<feature type="binding site" evidence="1">
    <location>
        <begin position="120"/>
        <end position="124"/>
    </location>
    <ligand>
        <name>UDP-N-acetyl-alpha-D-glucosamine</name>
        <dbReference type="ChEBI" id="CHEBI:57705"/>
    </ligand>
</feature>
<feature type="binding site" evidence="1">
    <location>
        <begin position="160"/>
        <end position="163"/>
    </location>
    <ligand>
        <name>UDP-N-acetyl-alpha-D-glucosamine</name>
        <dbReference type="ChEBI" id="CHEBI:57705"/>
    </ligand>
</feature>
<feature type="binding site" evidence="1">
    <location>
        <position position="305"/>
    </location>
    <ligand>
        <name>UDP-N-acetyl-alpha-D-glucosamine</name>
        <dbReference type="ChEBI" id="CHEBI:57705"/>
    </ligand>
</feature>
<feature type="binding site" evidence="1">
    <location>
        <position position="327"/>
    </location>
    <ligand>
        <name>UDP-N-acetyl-alpha-D-glucosamine</name>
        <dbReference type="ChEBI" id="CHEBI:57705"/>
    </ligand>
</feature>
<feature type="modified residue" description="2-(S-cysteinyl)pyruvic acid O-phosphothioketal" evidence="1">
    <location>
        <position position="115"/>
    </location>
</feature>
<accession>Q6DAF2</accession>
<sequence length="420" mass="44879">MDKFRVQGPTRLAGEVTISGAKNAALPILFAALLAEEPVEIQNVPKLRDIDTTMKLLGQLGARVERNGSVHVDASDVNVFCAPYDLVKTMRASIWALGPLVARFGQGQVSLPGGCAIGARPVDLHIYGLEQLGAQIVLEEGYVKATVDGRLKGAHIVMDKVSVGATVTIMSAATLAEGTTIIENAAREPEIVDTANFLNTLGAKISGAGSDKITIEGVARLGGGVYRVVPDRIETGTFLVAAAVSRGQIICRNTRPDTLDAVLAKLREAGADIEVGEDWISLDMHGKRPKAVTFRTSPHPGFPTDMQAQFSLLNLVAEGTGVITETIFENRFMHVPELIRMGAQAEIESNTVICHGVDKLSGAQVMATDLRASASLVLAGCIAEGVTTVDRIYHIDRGYDRIEDKLRALGANIERVKEHE</sequence>
<comment type="function">
    <text evidence="1">Cell wall formation. Adds enolpyruvyl to UDP-N-acetylglucosamine.</text>
</comment>
<comment type="catalytic activity">
    <reaction evidence="1">
        <text>phosphoenolpyruvate + UDP-N-acetyl-alpha-D-glucosamine = UDP-N-acetyl-3-O-(1-carboxyvinyl)-alpha-D-glucosamine + phosphate</text>
        <dbReference type="Rhea" id="RHEA:18681"/>
        <dbReference type="ChEBI" id="CHEBI:43474"/>
        <dbReference type="ChEBI" id="CHEBI:57705"/>
        <dbReference type="ChEBI" id="CHEBI:58702"/>
        <dbReference type="ChEBI" id="CHEBI:68483"/>
        <dbReference type="EC" id="2.5.1.7"/>
    </reaction>
</comment>
<comment type="pathway">
    <text evidence="1">Cell wall biogenesis; peptidoglycan biosynthesis.</text>
</comment>
<comment type="subcellular location">
    <subcellularLocation>
        <location evidence="1">Cytoplasm</location>
    </subcellularLocation>
</comment>
<comment type="similarity">
    <text evidence="1">Belongs to the EPSP synthase family. MurA subfamily.</text>
</comment>
<evidence type="ECO:0000255" key="1">
    <source>
        <dbReference type="HAMAP-Rule" id="MF_00111"/>
    </source>
</evidence>
<name>MURA_PECAS</name>
<keyword id="KW-0131">Cell cycle</keyword>
<keyword id="KW-0132">Cell division</keyword>
<keyword id="KW-0133">Cell shape</keyword>
<keyword id="KW-0961">Cell wall biogenesis/degradation</keyword>
<keyword id="KW-0963">Cytoplasm</keyword>
<keyword id="KW-0573">Peptidoglycan synthesis</keyword>
<keyword id="KW-0670">Pyruvate</keyword>
<keyword id="KW-1185">Reference proteome</keyword>
<keyword id="KW-0808">Transferase</keyword>
<gene>
    <name evidence="1" type="primary">murA</name>
    <name type="ordered locus">ECA0301</name>
</gene>
<dbReference type="EC" id="2.5.1.7" evidence="1"/>
<dbReference type="EMBL" id="BX950851">
    <property type="protein sequence ID" value="CAG73221.1"/>
    <property type="molecule type" value="Genomic_DNA"/>
</dbReference>
<dbReference type="RefSeq" id="WP_011091934.1">
    <property type="nucleotide sequence ID" value="NC_004547.2"/>
</dbReference>
<dbReference type="SMR" id="Q6DAF2"/>
<dbReference type="STRING" id="218491.ECA0301"/>
<dbReference type="GeneID" id="57207174"/>
<dbReference type="KEGG" id="eca:ECA0301"/>
<dbReference type="PATRIC" id="fig|218491.5.peg.303"/>
<dbReference type="eggNOG" id="COG0766">
    <property type="taxonomic scope" value="Bacteria"/>
</dbReference>
<dbReference type="HOGENOM" id="CLU_027387_0_0_6"/>
<dbReference type="OrthoDB" id="9803760at2"/>
<dbReference type="UniPathway" id="UPA00219"/>
<dbReference type="Proteomes" id="UP000007966">
    <property type="component" value="Chromosome"/>
</dbReference>
<dbReference type="GO" id="GO:0005737">
    <property type="term" value="C:cytoplasm"/>
    <property type="evidence" value="ECO:0007669"/>
    <property type="project" value="UniProtKB-SubCell"/>
</dbReference>
<dbReference type="GO" id="GO:0008760">
    <property type="term" value="F:UDP-N-acetylglucosamine 1-carboxyvinyltransferase activity"/>
    <property type="evidence" value="ECO:0007669"/>
    <property type="project" value="UniProtKB-UniRule"/>
</dbReference>
<dbReference type="GO" id="GO:0051301">
    <property type="term" value="P:cell division"/>
    <property type="evidence" value="ECO:0007669"/>
    <property type="project" value="UniProtKB-KW"/>
</dbReference>
<dbReference type="GO" id="GO:0071555">
    <property type="term" value="P:cell wall organization"/>
    <property type="evidence" value="ECO:0007669"/>
    <property type="project" value="UniProtKB-KW"/>
</dbReference>
<dbReference type="GO" id="GO:0009252">
    <property type="term" value="P:peptidoglycan biosynthetic process"/>
    <property type="evidence" value="ECO:0007669"/>
    <property type="project" value="UniProtKB-UniRule"/>
</dbReference>
<dbReference type="GO" id="GO:0008360">
    <property type="term" value="P:regulation of cell shape"/>
    <property type="evidence" value="ECO:0007669"/>
    <property type="project" value="UniProtKB-KW"/>
</dbReference>
<dbReference type="GO" id="GO:0019277">
    <property type="term" value="P:UDP-N-acetylgalactosamine biosynthetic process"/>
    <property type="evidence" value="ECO:0007669"/>
    <property type="project" value="InterPro"/>
</dbReference>
<dbReference type="CDD" id="cd01555">
    <property type="entry name" value="UdpNAET"/>
    <property type="match status" value="1"/>
</dbReference>
<dbReference type="FunFam" id="3.65.10.10:FF:000002">
    <property type="entry name" value="UDP-N-acetylglucosamine 1-carboxyvinyltransferase"/>
    <property type="match status" value="1"/>
</dbReference>
<dbReference type="Gene3D" id="3.65.10.10">
    <property type="entry name" value="Enolpyruvate transferase domain"/>
    <property type="match status" value="2"/>
</dbReference>
<dbReference type="HAMAP" id="MF_00111">
    <property type="entry name" value="MurA"/>
    <property type="match status" value="1"/>
</dbReference>
<dbReference type="InterPro" id="IPR001986">
    <property type="entry name" value="Enolpyruvate_Tfrase_dom"/>
</dbReference>
<dbReference type="InterPro" id="IPR036968">
    <property type="entry name" value="Enolpyruvate_Tfrase_sf"/>
</dbReference>
<dbReference type="InterPro" id="IPR050068">
    <property type="entry name" value="MurA_subfamily"/>
</dbReference>
<dbReference type="InterPro" id="IPR013792">
    <property type="entry name" value="RNA3'P_cycl/enolpyr_Trfase_a/b"/>
</dbReference>
<dbReference type="InterPro" id="IPR005750">
    <property type="entry name" value="UDP_GlcNAc_COvinyl_MurA"/>
</dbReference>
<dbReference type="NCBIfam" id="TIGR01072">
    <property type="entry name" value="murA"/>
    <property type="match status" value="1"/>
</dbReference>
<dbReference type="NCBIfam" id="NF006873">
    <property type="entry name" value="PRK09369.1"/>
    <property type="match status" value="1"/>
</dbReference>
<dbReference type="PANTHER" id="PTHR43783">
    <property type="entry name" value="UDP-N-ACETYLGLUCOSAMINE 1-CARBOXYVINYLTRANSFERASE"/>
    <property type="match status" value="1"/>
</dbReference>
<dbReference type="PANTHER" id="PTHR43783:SF1">
    <property type="entry name" value="UDP-N-ACETYLGLUCOSAMINE 1-CARBOXYVINYLTRANSFERASE"/>
    <property type="match status" value="1"/>
</dbReference>
<dbReference type="Pfam" id="PF00275">
    <property type="entry name" value="EPSP_synthase"/>
    <property type="match status" value="1"/>
</dbReference>
<dbReference type="SUPFAM" id="SSF55205">
    <property type="entry name" value="EPT/RTPC-like"/>
    <property type="match status" value="1"/>
</dbReference>